<evidence type="ECO:0000255" key="1">
    <source>
        <dbReference type="HAMAP-Rule" id="MF_00034"/>
    </source>
</evidence>
<sequence length="173" mass="18747">MAIILGIDPGSRVTGYGVIRQVGRQLSYLGSGCIRTKVDDLPSRLKLIYAGVTEIITQFQPDYFAIEQVFMAKNADSALKLGQARGVAIVAAVNQELPVFEYAARQVKQTVVGIGSAEKSQVQHMVRTLLKLPANPQADAADALAIAITHCHVSQNAMQMSESRLNLARGRLR</sequence>
<reference key="1">
    <citation type="journal article" date="2009" name="PLoS Genet.">
        <title>Organised genome dynamics in the Escherichia coli species results in highly diverse adaptive paths.</title>
        <authorList>
            <person name="Touchon M."/>
            <person name="Hoede C."/>
            <person name="Tenaillon O."/>
            <person name="Barbe V."/>
            <person name="Baeriswyl S."/>
            <person name="Bidet P."/>
            <person name="Bingen E."/>
            <person name="Bonacorsi S."/>
            <person name="Bouchier C."/>
            <person name="Bouvet O."/>
            <person name="Calteau A."/>
            <person name="Chiapello H."/>
            <person name="Clermont O."/>
            <person name="Cruveiller S."/>
            <person name="Danchin A."/>
            <person name="Diard M."/>
            <person name="Dossat C."/>
            <person name="Karoui M.E."/>
            <person name="Frapy E."/>
            <person name="Garry L."/>
            <person name="Ghigo J.M."/>
            <person name="Gilles A.M."/>
            <person name="Johnson J."/>
            <person name="Le Bouguenec C."/>
            <person name="Lescat M."/>
            <person name="Mangenot S."/>
            <person name="Martinez-Jehanne V."/>
            <person name="Matic I."/>
            <person name="Nassif X."/>
            <person name="Oztas S."/>
            <person name="Petit M.A."/>
            <person name="Pichon C."/>
            <person name="Rouy Z."/>
            <person name="Ruf C.S."/>
            <person name="Schneider D."/>
            <person name="Tourret J."/>
            <person name="Vacherie B."/>
            <person name="Vallenet D."/>
            <person name="Medigue C."/>
            <person name="Rocha E.P.C."/>
            <person name="Denamur E."/>
        </authorList>
    </citation>
    <scope>NUCLEOTIDE SEQUENCE [LARGE SCALE GENOMIC DNA]</scope>
    <source>
        <strain>55989 / EAEC</strain>
    </source>
</reference>
<comment type="function">
    <text evidence="1">The RuvA-RuvB-RuvC complex processes Holliday junction (HJ) DNA during genetic recombination and DNA repair. Endonuclease that resolves HJ intermediates. Cleaves cruciform DNA by making single-stranded nicks across the HJ at symmetrical positions within the homologous arms, yielding a 5'-phosphate and a 3'-hydroxyl group; requires a central core of homology in the junction. The consensus cleavage sequence is 5'-(A/T)TT(C/G)-3'. Cleavage occurs on the 3'-side of the TT dinucleotide at the point of strand exchange. HJ branch migration catalyzed by RuvA-RuvB allows RuvC to scan DNA until it finds its consensus sequence, where it cleaves and resolves the cruciform DNA.</text>
</comment>
<comment type="catalytic activity">
    <reaction evidence="1">
        <text>Endonucleolytic cleavage at a junction such as a reciprocal single-stranded crossover between two homologous DNA duplexes (Holliday junction).</text>
        <dbReference type="EC" id="3.1.21.10"/>
    </reaction>
</comment>
<comment type="cofactor">
    <cofactor evidence="1">
        <name>Mg(2+)</name>
        <dbReference type="ChEBI" id="CHEBI:18420"/>
    </cofactor>
    <text evidence="1">Binds 2 Mg(2+) ion per subunit.</text>
</comment>
<comment type="subunit">
    <text evidence="1">Homodimer which binds Holliday junction (HJ) DNA. The HJ becomes 2-fold symmetrical on binding to RuvC with unstacked arms; it has a different conformation from HJ DNA in complex with RuvA. In the full resolvosome a probable DNA-RuvA(4)-RuvB(12)-RuvC(2) complex forms which resolves the HJ.</text>
</comment>
<comment type="subcellular location">
    <subcellularLocation>
        <location evidence="1">Cytoplasm</location>
    </subcellularLocation>
</comment>
<comment type="similarity">
    <text evidence="1">Belongs to the RuvC family.</text>
</comment>
<protein>
    <recommendedName>
        <fullName evidence="1">Crossover junction endodeoxyribonuclease RuvC</fullName>
        <ecNumber evidence="1">3.1.21.10</ecNumber>
    </recommendedName>
    <alternativeName>
        <fullName evidence="1">Holliday junction nuclease RuvC</fullName>
    </alternativeName>
    <alternativeName>
        <fullName evidence="1">Holliday junction resolvase RuvC</fullName>
    </alternativeName>
</protein>
<keyword id="KW-0963">Cytoplasm</keyword>
<keyword id="KW-0227">DNA damage</keyword>
<keyword id="KW-0233">DNA recombination</keyword>
<keyword id="KW-0234">DNA repair</keyword>
<keyword id="KW-0238">DNA-binding</keyword>
<keyword id="KW-0255">Endonuclease</keyword>
<keyword id="KW-0378">Hydrolase</keyword>
<keyword id="KW-0460">Magnesium</keyword>
<keyword id="KW-0479">Metal-binding</keyword>
<keyword id="KW-0540">Nuclease</keyword>
<keyword id="KW-1185">Reference proteome</keyword>
<accession>B7L7R6</accession>
<organism>
    <name type="scientific">Escherichia coli (strain 55989 / EAEC)</name>
    <dbReference type="NCBI Taxonomy" id="585055"/>
    <lineage>
        <taxon>Bacteria</taxon>
        <taxon>Pseudomonadati</taxon>
        <taxon>Pseudomonadota</taxon>
        <taxon>Gammaproteobacteria</taxon>
        <taxon>Enterobacterales</taxon>
        <taxon>Enterobacteriaceae</taxon>
        <taxon>Escherichia</taxon>
    </lineage>
</organism>
<dbReference type="EC" id="3.1.21.10" evidence="1"/>
<dbReference type="EMBL" id="CU928145">
    <property type="protein sequence ID" value="CAU97900.1"/>
    <property type="molecule type" value="Genomic_DNA"/>
</dbReference>
<dbReference type="RefSeq" id="WP_001295503.1">
    <property type="nucleotide sequence ID" value="NZ_CP028304.1"/>
</dbReference>
<dbReference type="SMR" id="B7L7R6"/>
<dbReference type="GeneID" id="89516631"/>
<dbReference type="KEGG" id="eck:EC55989_2042"/>
<dbReference type="HOGENOM" id="CLU_091257_2_1_6"/>
<dbReference type="Proteomes" id="UP000000746">
    <property type="component" value="Chromosome"/>
</dbReference>
<dbReference type="GO" id="GO:0005737">
    <property type="term" value="C:cytoplasm"/>
    <property type="evidence" value="ECO:0007669"/>
    <property type="project" value="UniProtKB-SubCell"/>
</dbReference>
<dbReference type="GO" id="GO:0048476">
    <property type="term" value="C:Holliday junction resolvase complex"/>
    <property type="evidence" value="ECO:0007669"/>
    <property type="project" value="UniProtKB-UniRule"/>
</dbReference>
<dbReference type="GO" id="GO:0008821">
    <property type="term" value="F:crossover junction DNA endonuclease activity"/>
    <property type="evidence" value="ECO:0007669"/>
    <property type="project" value="UniProtKB-UniRule"/>
</dbReference>
<dbReference type="GO" id="GO:0003677">
    <property type="term" value="F:DNA binding"/>
    <property type="evidence" value="ECO:0007669"/>
    <property type="project" value="UniProtKB-KW"/>
</dbReference>
<dbReference type="GO" id="GO:0000287">
    <property type="term" value="F:magnesium ion binding"/>
    <property type="evidence" value="ECO:0007669"/>
    <property type="project" value="UniProtKB-UniRule"/>
</dbReference>
<dbReference type="GO" id="GO:0006310">
    <property type="term" value="P:DNA recombination"/>
    <property type="evidence" value="ECO:0007669"/>
    <property type="project" value="UniProtKB-UniRule"/>
</dbReference>
<dbReference type="GO" id="GO:0006281">
    <property type="term" value="P:DNA repair"/>
    <property type="evidence" value="ECO:0007669"/>
    <property type="project" value="UniProtKB-UniRule"/>
</dbReference>
<dbReference type="CDD" id="cd16962">
    <property type="entry name" value="RuvC"/>
    <property type="match status" value="1"/>
</dbReference>
<dbReference type="FunFam" id="3.30.420.10:FF:000002">
    <property type="entry name" value="Crossover junction endodeoxyribonuclease RuvC"/>
    <property type="match status" value="1"/>
</dbReference>
<dbReference type="Gene3D" id="3.30.420.10">
    <property type="entry name" value="Ribonuclease H-like superfamily/Ribonuclease H"/>
    <property type="match status" value="1"/>
</dbReference>
<dbReference type="HAMAP" id="MF_00034">
    <property type="entry name" value="RuvC"/>
    <property type="match status" value="1"/>
</dbReference>
<dbReference type="InterPro" id="IPR012337">
    <property type="entry name" value="RNaseH-like_sf"/>
</dbReference>
<dbReference type="InterPro" id="IPR036397">
    <property type="entry name" value="RNaseH_sf"/>
</dbReference>
<dbReference type="InterPro" id="IPR020563">
    <property type="entry name" value="X-over_junc_endoDNase_Mg_BS"/>
</dbReference>
<dbReference type="InterPro" id="IPR002176">
    <property type="entry name" value="X-over_junc_endoDNase_RuvC"/>
</dbReference>
<dbReference type="NCBIfam" id="NF000711">
    <property type="entry name" value="PRK00039.2-1"/>
    <property type="match status" value="1"/>
</dbReference>
<dbReference type="NCBIfam" id="TIGR00228">
    <property type="entry name" value="ruvC"/>
    <property type="match status" value="1"/>
</dbReference>
<dbReference type="PANTHER" id="PTHR30194">
    <property type="entry name" value="CROSSOVER JUNCTION ENDODEOXYRIBONUCLEASE RUVC"/>
    <property type="match status" value="1"/>
</dbReference>
<dbReference type="PANTHER" id="PTHR30194:SF3">
    <property type="entry name" value="CROSSOVER JUNCTION ENDODEOXYRIBONUCLEASE RUVC"/>
    <property type="match status" value="1"/>
</dbReference>
<dbReference type="Pfam" id="PF02075">
    <property type="entry name" value="RuvC"/>
    <property type="match status" value="1"/>
</dbReference>
<dbReference type="PRINTS" id="PR00696">
    <property type="entry name" value="RSOLVASERUVC"/>
</dbReference>
<dbReference type="SUPFAM" id="SSF53098">
    <property type="entry name" value="Ribonuclease H-like"/>
    <property type="match status" value="1"/>
</dbReference>
<dbReference type="PROSITE" id="PS01321">
    <property type="entry name" value="RUVC"/>
    <property type="match status" value="1"/>
</dbReference>
<proteinExistence type="inferred from homology"/>
<name>RUVC_ECO55</name>
<gene>
    <name evidence="1" type="primary">ruvC</name>
    <name type="ordered locus">EC55989_2042</name>
</gene>
<feature type="chain" id="PRO_1000195250" description="Crossover junction endodeoxyribonuclease RuvC">
    <location>
        <begin position="1"/>
        <end position="173"/>
    </location>
</feature>
<feature type="active site" evidence="1">
    <location>
        <position position="8"/>
    </location>
</feature>
<feature type="active site" evidence="1">
    <location>
        <position position="67"/>
    </location>
</feature>
<feature type="active site" evidence="1">
    <location>
        <position position="139"/>
    </location>
</feature>
<feature type="binding site" evidence="1">
    <location>
        <position position="8"/>
    </location>
    <ligand>
        <name>Mg(2+)</name>
        <dbReference type="ChEBI" id="CHEBI:18420"/>
        <label>1</label>
    </ligand>
</feature>
<feature type="binding site" evidence="1">
    <location>
        <position position="67"/>
    </location>
    <ligand>
        <name>Mg(2+)</name>
        <dbReference type="ChEBI" id="CHEBI:18420"/>
        <label>2</label>
    </ligand>
</feature>
<feature type="binding site" evidence="1">
    <location>
        <position position="139"/>
    </location>
    <ligand>
        <name>Mg(2+)</name>
        <dbReference type="ChEBI" id="CHEBI:18420"/>
        <label>1</label>
    </ligand>
</feature>